<evidence type="ECO:0000255" key="1">
    <source>
        <dbReference type="HAMAP-Rule" id="MF_00368"/>
    </source>
</evidence>
<evidence type="ECO:0000305" key="2"/>
<proteinExistence type="inferred from homology"/>
<comment type="function">
    <text evidence="1">Forms part of the ribosomal stalk which helps the ribosome interact with GTP-bound translation factors. Is thus essential for accurate translation.</text>
</comment>
<comment type="subunit">
    <text evidence="1">Homodimer. Part of the ribosomal stalk of the 50S ribosomal subunit. Forms a multimeric L10(L12)X complex, where L10 forms an elongated spine to which 2 to 4 L12 dimers bind in a sequential fashion. Binds GTP-bound translation factors.</text>
</comment>
<comment type="similarity">
    <text evidence="1">Belongs to the bacterial ribosomal protein bL12 family.</text>
</comment>
<keyword id="KW-1185">Reference proteome</keyword>
<keyword id="KW-0687">Ribonucleoprotein</keyword>
<keyword id="KW-0689">Ribosomal protein</keyword>
<gene>
    <name evidence="1" type="primary">rplL</name>
    <name evidence="1" type="synonym">rpl12</name>
    <name type="ordered locus">SynRCC307_2355</name>
</gene>
<protein>
    <recommendedName>
        <fullName evidence="1">Large ribosomal subunit protein bL12</fullName>
    </recommendedName>
    <alternativeName>
        <fullName evidence="2">50S ribosomal protein L7/L12</fullName>
    </alternativeName>
</protein>
<feature type="chain" id="PRO_1000007103" description="Large ribosomal subunit protein bL12">
    <location>
        <begin position="1"/>
        <end position="130"/>
    </location>
</feature>
<reference key="1">
    <citation type="submission" date="2006-05" db="EMBL/GenBank/DDBJ databases">
        <authorList>
            <consortium name="Genoscope"/>
        </authorList>
    </citation>
    <scope>NUCLEOTIDE SEQUENCE [LARGE SCALE GENOMIC DNA]</scope>
    <source>
        <strain>RCC307</strain>
    </source>
</reference>
<sequence length="130" mass="13098">MSAKTDEILESLKTLSLLEASELVKQIEEAFGVSAAASAGAVVMAAPGAAAGGGEAAEEKTEFDVILESFDAAAKIKVLKAVREATGLGLADAKGLVEKAPTPVKEGVAKAAAEDMKKAIEEAGGKVTLK</sequence>
<accession>A5GWJ9</accession>
<organism>
    <name type="scientific">Synechococcus sp. (strain RCC307)</name>
    <dbReference type="NCBI Taxonomy" id="316278"/>
    <lineage>
        <taxon>Bacteria</taxon>
        <taxon>Bacillati</taxon>
        <taxon>Cyanobacteriota</taxon>
        <taxon>Cyanophyceae</taxon>
        <taxon>Synechococcales</taxon>
        <taxon>Synechococcaceae</taxon>
        <taxon>Synechococcus</taxon>
    </lineage>
</organism>
<dbReference type="EMBL" id="CT978603">
    <property type="protein sequence ID" value="CAK29258.1"/>
    <property type="molecule type" value="Genomic_DNA"/>
</dbReference>
<dbReference type="SMR" id="A5GWJ9"/>
<dbReference type="STRING" id="316278.SynRCC307_2355"/>
<dbReference type="KEGG" id="syr:SynRCC307_2355"/>
<dbReference type="eggNOG" id="COG0222">
    <property type="taxonomic scope" value="Bacteria"/>
</dbReference>
<dbReference type="HOGENOM" id="CLU_086499_3_0_3"/>
<dbReference type="OrthoDB" id="9811748at2"/>
<dbReference type="Proteomes" id="UP000001115">
    <property type="component" value="Chromosome"/>
</dbReference>
<dbReference type="GO" id="GO:0022625">
    <property type="term" value="C:cytosolic large ribosomal subunit"/>
    <property type="evidence" value="ECO:0007669"/>
    <property type="project" value="TreeGrafter"/>
</dbReference>
<dbReference type="GO" id="GO:0003729">
    <property type="term" value="F:mRNA binding"/>
    <property type="evidence" value="ECO:0007669"/>
    <property type="project" value="TreeGrafter"/>
</dbReference>
<dbReference type="GO" id="GO:0003735">
    <property type="term" value="F:structural constituent of ribosome"/>
    <property type="evidence" value="ECO:0007669"/>
    <property type="project" value="InterPro"/>
</dbReference>
<dbReference type="GO" id="GO:0006412">
    <property type="term" value="P:translation"/>
    <property type="evidence" value="ECO:0007669"/>
    <property type="project" value="UniProtKB-UniRule"/>
</dbReference>
<dbReference type="CDD" id="cd00387">
    <property type="entry name" value="Ribosomal_L7_L12"/>
    <property type="match status" value="1"/>
</dbReference>
<dbReference type="FunFam" id="3.30.1390.10:FF:000001">
    <property type="entry name" value="50S ribosomal protein L7/L12"/>
    <property type="match status" value="1"/>
</dbReference>
<dbReference type="Gene3D" id="3.30.1390.10">
    <property type="match status" value="1"/>
</dbReference>
<dbReference type="Gene3D" id="1.20.5.710">
    <property type="entry name" value="Single helix bin"/>
    <property type="match status" value="1"/>
</dbReference>
<dbReference type="HAMAP" id="MF_00368">
    <property type="entry name" value="Ribosomal_bL12"/>
    <property type="match status" value="1"/>
</dbReference>
<dbReference type="InterPro" id="IPR000206">
    <property type="entry name" value="Ribosomal_bL12"/>
</dbReference>
<dbReference type="InterPro" id="IPR013823">
    <property type="entry name" value="Ribosomal_bL12_C"/>
</dbReference>
<dbReference type="InterPro" id="IPR014719">
    <property type="entry name" value="Ribosomal_bL12_C/ClpS-like"/>
</dbReference>
<dbReference type="InterPro" id="IPR008932">
    <property type="entry name" value="Ribosomal_bL12_oligo"/>
</dbReference>
<dbReference type="InterPro" id="IPR036235">
    <property type="entry name" value="Ribosomal_bL12_oligo_N_sf"/>
</dbReference>
<dbReference type="NCBIfam" id="TIGR00855">
    <property type="entry name" value="L12"/>
    <property type="match status" value="1"/>
</dbReference>
<dbReference type="PANTHER" id="PTHR45987">
    <property type="entry name" value="39S RIBOSOMAL PROTEIN L12"/>
    <property type="match status" value="1"/>
</dbReference>
<dbReference type="PANTHER" id="PTHR45987:SF4">
    <property type="entry name" value="LARGE RIBOSOMAL SUBUNIT PROTEIN BL12M"/>
    <property type="match status" value="1"/>
</dbReference>
<dbReference type="Pfam" id="PF00542">
    <property type="entry name" value="Ribosomal_L12"/>
    <property type="match status" value="1"/>
</dbReference>
<dbReference type="Pfam" id="PF16320">
    <property type="entry name" value="Ribosomal_L12_N"/>
    <property type="match status" value="1"/>
</dbReference>
<dbReference type="SUPFAM" id="SSF54736">
    <property type="entry name" value="ClpS-like"/>
    <property type="match status" value="1"/>
</dbReference>
<dbReference type="SUPFAM" id="SSF48300">
    <property type="entry name" value="Ribosomal protein L7/12, oligomerisation (N-terminal) domain"/>
    <property type="match status" value="1"/>
</dbReference>
<name>RL7_SYNR3</name>